<protein>
    <recommendedName>
        <fullName evidence="1">UPF0102 protein XOO3617</fullName>
    </recommendedName>
</protein>
<accession>Q2NZA5</accession>
<feature type="chain" id="PRO_1000009278" description="UPF0102 protein XOO3617">
    <location>
        <begin position="1"/>
        <end position="122"/>
    </location>
</feature>
<reference key="1">
    <citation type="journal article" date="2005" name="Jpn. Agric. Res. Q.">
        <title>Genome sequence of Xanthomonas oryzae pv. oryzae suggests contribution of large numbers of effector genes and insertion sequences to its race diversity.</title>
        <authorList>
            <person name="Ochiai H."/>
            <person name="Inoue Y."/>
            <person name="Takeya M."/>
            <person name="Sasaki A."/>
            <person name="Kaku H."/>
        </authorList>
    </citation>
    <scope>NUCLEOTIDE SEQUENCE [LARGE SCALE GENOMIC DNA]</scope>
    <source>
        <strain>MAFF 311018</strain>
    </source>
</reference>
<organism>
    <name type="scientific">Xanthomonas oryzae pv. oryzae (strain MAFF 311018)</name>
    <dbReference type="NCBI Taxonomy" id="342109"/>
    <lineage>
        <taxon>Bacteria</taxon>
        <taxon>Pseudomonadati</taxon>
        <taxon>Pseudomonadota</taxon>
        <taxon>Gammaproteobacteria</taxon>
        <taxon>Lysobacterales</taxon>
        <taxon>Lysobacteraceae</taxon>
        <taxon>Xanthomonas</taxon>
    </lineage>
</organism>
<name>Y3617_XANOM</name>
<evidence type="ECO:0000255" key="1">
    <source>
        <dbReference type="HAMAP-Rule" id="MF_00048"/>
    </source>
</evidence>
<proteinExistence type="inferred from homology"/>
<sequence length="122" mass="13356">MPAARQQRGAGVEAAARALLEQAGLRLVVGNANYRGGELDLVMRDGQSLVFVEVRYRRDDRFGGGAASVDWRKRRKLVLAAQLFLGAHPALAALPCRFDVVDASGEPPVLHWIRDAFRADDC</sequence>
<comment type="similarity">
    <text evidence="1">Belongs to the UPF0102 family.</text>
</comment>
<gene>
    <name type="ordered locus">XOO3617</name>
</gene>
<dbReference type="EMBL" id="AP008229">
    <property type="protein sequence ID" value="BAE70372.1"/>
    <property type="molecule type" value="Genomic_DNA"/>
</dbReference>
<dbReference type="RefSeq" id="WP_011409386.1">
    <property type="nucleotide sequence ID" value="NC_007705.1"/>
</dbReference>
<dbReference type="SMR" id="Q2NZA5"/>
<dbReference type="KEGG" id="xom:XOO3617"/>
<dbReference type="HOGENOM" id="CLU_115353_1_0_6"/>
<dbReference type="GO" id="GO:0003676">
    <property type="term" value="F:nucleic acid binding"/>
    <property type="evidence" value="ECO:0007669"/>
    <property type="project" value="InterPro"/>
</dbReference>
<dbReference type="Gene3D" id="3.40.1350.10">
    <property type="match status" value="1"/>
</dbReference>
<dbReference type="HAMAP" id="MF_00048">
    <property type="entry name" value="UPF0102"/>
    <property type="match status" value="1"/>
</dbReference>
<dbReference type="InterPro" id="IPR011335">
    <property type="entry name" value="Restrct_endonuc-II-like"/>
</dbReference>
<dbReference type="InterPro" id="IPR011856">
    <property type="entry name" value="tRNA_endonuc-like_dom_sf"/>
</dbReference>
<dbReference type="InterPro" id="IPR003509">
    <property type="entry name" value="UPF0102_YraN-like"/>
</dbReference>
<dbReference type="NCBIfam" id="NF009150">
    <property type="entry name" value="PRK12497.1-3"/>
    <property type="match status" value="1"/>
</dbReference>
<dbReference type="NCBIfam" id="TIGR00252">
    <property type="entry name" value="YraN family protein"/>
    <property type="match status" value="1"/>
</dbReference>
<dbReference type="PANTHER" id="PTHR34039">
    <property type="entry name" value="UPF0102 PROTEIN YRAN"/>
    <property type="match status" value="1"/>
</dbReference>
<dbReference type="PANTHER" id="PTHR34039:SF1">
    <property type="entry name" value="UPF0102 PROTEIN YRAN"/>
    <property type="match status" value="1"/>
</dbReference>
<dbReference type="Pfam" id="PF02021">
    <property type="entry name" value="UPF0102"/>
    <property type="match status" value="1"/>
</dbReference>
<dbReference type="SUPFAM" id="SSF52980">
    <property type="entry name" value="Restriction endonuclease-like"/>
    <property type="match status" value="1"/>
</dbReference>